<evidence type="ECO:0000250" key="1">
    <source>
        <dbReference type="UniProtKB" id="Q14914"/>
    </source>
</evidence>
<evidence type="ECO:0000256" key="2">
    <source>
        <dbReference type="SAM" id="MobiDB-lite"/>
    </source>
</evidence>
<evidence type="ECO:0000269" key="3">
    <source>
    </source>
</evidence>
<evidence type="ECO:0000303" key="4">
    <source>
    </source>
</evidence>
<evidence type="ECO:0000305" key="5"/>
<sequence length="345" mass="37610">MGQQKQRNRRWVLASRPHGAPVPENFRLEEDDVATPGEGQVLLRTVYLSLDPYMRGRMSDEPSYSPPVDIGGVMVGGTVSRVVESNHPDYQSGDWVLGYSGWQDYDISSGDDLVKLGDHPQNPSWSLGVLGMPGFTAYMGLLDIGQPKEGETLVVAAATGPVGATVGQIGKLKGCRVVGVAGGAEKCRHATEVLGFDVCLDHHADDFAEQLAKACPKGIDIYYENVGGKVFDAVLPLLNTSARIPVCGLVSSYNATELPPGPDRLPLLMATVLKKRIRLQGFIIAQDYGHRIHEFQREMGQWVKEDKIHYREEITDGLENAPQTFIGLLKGKNFGKVVIRVAGDD</sequence>
<protein>
    <recommendedName>
        <fullName evidence="4">NADPH-dependent curcumin reductase</fullName>
        <ecNumber evidence="3">1.3.1.n3</ecNumber>
    </recommendedName>
    <alternativeName>
        <fullName evidence="4">NADPH-dependent curcumin/dihydrocurcumin reductase</fullName>
    </alternativeName>
</protein>
<feature type="chain" id="PRO_0000218075" description="NADPH-dependent curcumin reductase">
    <location>
        <begin position="1"/>
        <end position="345"/>
    </location>
</feature>
<feature type="region of interest" description="Disordered" evidence="2">
    <location>
        <begin position="1"/>
        <end position="24"/>
    </location>
</feature>
<feature type="compositionally biased region" description="Basic residues" evidence="2">
    <location>
        <begin position="1"/>
        <end position="10"/>
    </location>
</feature>
<feature type="binding site" evidence="1">
    <location>
        <position position="186"/>
    </location>
    <ligand>
        <name>NADP(+)</name>
        <dbReference type="ChEBI" id="CHEBI:58349"/>
    </ligand>
</feature>
<feature type="binding site" evidence="1">
    <location>
        <position position="225"/>
    </location>
    <ligand>
        <name>NADP(+)</name>
        <dbReference type="ChEBI" id="CHEBI:58349"/>
    </ligand>
</feature>
<feature type="binding site" evidence="1">
    <location>
        <position position="333"/>
    </location>
    <ligand>
        <name>NADP(+)</name>
        <dbReference type="ChEBI" id="CHEBI:58349"/>
    </ligand>
</feature>
<feature type="mutagenesis site" description="Exhibits a reduction of about 50% in activity, but is not inhibited by 5,5'-dithio-bis-2-nitrobenzoate." evidence="3">
    <original>C</original>
    <variation>A</variation>
    <location>
        <position position="247"/>
    </location>
</feature>
<keyword id="KW-0521">NADP</keyword>
<keyword id="KW-0560">Oxidoreductase</keyword>
<keyword id="KW-1185">Reference proteome</keyword>
<gene>
    <name evidence="4" type="primary">curA</name>
    <name type="synonym">yncB</name>
    <name type="ordered locus">b1449</name>
    <name type="ordered locus">JW5907</name>
</gene>
<proteinExistence type="evidence at protein level"/>
<organism>
    <name type="scientific">Escherichia coli (strain K12)</name>
    <dbReference type="NCBI Taxonomy" id="83333"/>
    <lineage>
        <taxon>Bacteria</taxon>
        <taxon>Pseudomonadati</taxon>
        <taxon>Pseudomonadota</taxon>
        <taxon>Gammaproteobacteria</taxon>
        <taxon>Enterobacterales</taxon>
        <taxon>Enterobacteriaceae</taxon>
        <taxon>Escherichia</taxon>
    </lineage>
</organism>
<name>CURA_ECOLI</name>
<accession>P76113</accession>
<accession>P78255</accession>
<comment type="function">
    <text evidence="3">Catalyzes the metal-independent reduction of curcumin to dihydrocurcumin (DHC) as an intermediate product, followed by further reduction to tetrahydrocurcumin (THC) as an end product. It also acts on 3-octene-2-one, 3-hepten-2-one, resveratrol, and trans-2-octenal.</text>
</comment>
<comment type="catalytic activity">
    <reaction evidence="3">
        <text>tetrahydrocurcumin + 2 NADP(+) = curcumin + 2 NADPH + 2 H(+)</text>
        <dbReference type="Rhea" id="RHEA:34815"/>
        <dbReference type="ChEBI" id="CHEBI:3962"/>
        <dbReference type="ChEBI" id="CHEBI:15378"/>
        <dbReference type="ChEBI" id="CHEBI:57783"/>
        <dbReference type="ChEBI" id="CHEBI:58349"/>
        <dbReference type="ChEBI" id="CHEBI:67263"/>
        <dbReference type="EC" id="1.3.1.n3"/>
    </reaction>
    <physiologicalReaction direction="right-to-left" evidence="3">
        <dbReference type="Rhea" id="RHEA:34817"/>
    </physiologicalReaction>
</comment>
<comment type="catalytic activity">
    <reaction evidence="3">
        <text>tetrahydrocurcumin + NADP(+) = dihydrocurcumin + NADPH + H(+)</text>
        <dbReference type="Rhea" id="RHEA:34811"/>
        <dbReference type="ChEBI" id="CHEBI:15378"/>
        <dbReference type="ChEBI" id="CHEBI:57783"/>
        <dbReference type="ChEBI" id="CHEBI:58349"/>
        <dbReference type="ChEBI" id="CHEBI:67262"/>
        <dbReference type="ChEBI" id="CHEBI:67263"/>
        <dbReference type="EC" id="1.3.1.n3"/>
    </reaction>
    <physiologicalReaction direction="right-to-left" evidence="3">
        <dbReference type="Rhea" id="RHEA:34813"/>
    </physiologicalReaction>
</comment>
<comment type="catalytic activity">
    <reaction evidence="3">
        <text>dihydrocurcumin + NADP(+) = curcumin + NADPH + H(+)</text>
        <dbReference type="Rhea" id="RHEA:34819"/>
        <dbReference type="ChEBI" id="CHEBI:3962"/>
        <dbReference type="ChEBI" id="CHEBI:15378"/>
        <dbReference type="ChEBI" id="CHEBI:57783"/>
        <dbReference type="ChEBI" id="CHEBI:58349"/>
        <dbReference type="ChEBI" id="CHEBI:67262"/>
        <dbReference type="EC" id="1.3.1.n3"/>
    </reaction>
    <physiologicalReaction direction="right-to-left" evidence="3">
        <dbReference type="Rhea" id="RHEA:34821"/>
    </physiologicalReaction>
</comment>
<comment type="activity regulation">
    <text evidence="3">Inhibited by thiol-specific reagents (p-chloromercuribenzoate and 5,5'-dithio-bis-2-nitrobenzoate).</text>
</comment>
<comment type="biophysicochemical properties">
    <kinetics>
        <KM evidence="3">29 uM for curcumin</KM>
        <Vmax evidence="3">9.35 umol/min/mg enzyme</Vmax>
    </kinetics>
    <phDependence>
        <text evidence="3">Optimum pH is 5.9. The enzyme is most stable in the pH range of 4.5 to 12.0, with 90% of the initial activity being retained even at pH 12.0.</text>
    </phDependence>
    <temperatureDependence>
        <text evidence="3">Optimum temperature is 35 degrees Celsius. The enzyme is most stable from 10 to 50 degrees Celsius.</text>
    </temperatureDependence>
</comment>
<comment type="subunit">
    <text evidence="3">Homodimer.</text>
</comment>
<comment type="mass spectrometry" mass="37513.0" method="MALDI" evidence="3"/>
<comment type="similarity">
    <text evidence="5">Belongs to the NADP-dependent oxidoreductase L4BD family.</text>
</comment>
<dbReference type="EC" id="1.3.1.n3" evidence="3"/>
<dbReference type="EMBL" id="U00096">
    <property type="protein sequence ID" value="AAC74531.4"/>
    <property type="molecule type" value="Genomic_DNA"/>
</dbReference>
<dbReference type="EMBL" id="AP009048">
    <property type="protein sequence ID" value="BAA15081.2"/>
    <property type="molecule type" value="Genomic_DNA"/>
</dbReference>
<dbReference type="PIR" id="D64897">
    <property type="entry name" value="D64897"/>
</dbReference>
<dbReference type="RefSeq" id="NP_415966.6">
    <property type="nucleotide sequence ID" value="NC_000913.3"/>
</dbReference>
<dbReference type="RefSeq" id="WP_000531462.1">
    <property type="nucleotide sequence ID" value="NZ_SSZK01000021.1"/>
</dbReference>
<dbReference type="SMR" id="P76113"/>
<dbReference type="BioGRID" id="4260195">
    <property type="interactions" value="15"/>
</dbReference>
<dbReference type="DIP" id="DIP-12748N"/>
<dbReference type="FunCoup" id="P76113">
    <property type="interactions" value="315"/>
</dbReference>
<dbReference type="STRING" id="511145.b1449"/>
<dbReference type="jPOST" id="P76113"/>
<dbReference type="PaxDb" id="511145-b1449"/>
<dbReference type="EnsemblBacteria" id="AAC74531">
    <property type="protein sequence ID" value="AAC74531"/>
    <property type="gene ID" value="b1449"/>
</dbReference>
<dbReference type="GeneID" id="946012"/>
<dbReference type="KEGG" id="ecj:JW5907"/>
<dbReference type="KEGG" id="eco:b1449"/>
<dbReference type="KEGG" id="ecoc:C3026_08430"/>
<dbReference type="PATRIC" id="fig|1411691.4.peg.819"/>
<dbReference type="EchoBASE" id="EB3534"/>
<dbReference type="eggNOG" id="COG2130">
    <property type="taxonomic scope" value="Bacteria"/>
</dbReference>
<dbReference type="InParanoid" id="P76113"/>
<dbReference type="OrthoDB" id="9805663at2"/>
<dbReference type="PhylomeDB" id="P76113"/>
<dbReference type="BioCyc" id="EcoCyc:G6760-MONOMER"/>
<dbReference type="BioCyc" id="MetaCyc:G6760-MONOMER"/>
<dbReference type="PRO" id="PR:P76113"/>
<dbReference type="Proteomes" id="UP000000625">
    <property type="component" value="Chromosome"/>
</dbReference>
<dbReference type="GO" id="GO:0052849">
    <property type="term" value="F:curcumin reductase (NADP+) activity"/>
    <property type="evidence" value="ECO:0007669"/>
    <property type="project" value="RHEA"/>
</dbReference>
<dbReference type="CDD" id="cd05288">
    <property type="entry name" value="PGDH"/>
    <property type="match status" value="1"/>
</dbReference>
<dbReference type="FunFam" id="3.40.50.720:FF:000121">
    <property type="entry name" value="Prostaglandin reductase 2"/>
    <property type="match status" value="1"/>
</dbReference>
<dbReference type="Gene3D" id="3.90.180.10">
    <property type="entry name" value="Medium-chain alcohol dehydrogenases, catalytic domain"/>
    <property type="match status" value="1"/>
</dbReference>
<dbReference type="Gene3D" id="3.40.50.720">
    <property type="entry name" value="NAD(P)-binding Rossmann-like Domain"/>
    <property type="match status" value="1"/>
</dbReference>
<dbReference type="InterPro" id="IPR013149">
    <property type="entry name" value="ADH-like_C"/>
</dbReference>
<dbReference type="InterPro" id="IPR041694">
    <property type="entry name" value="ADH_N_2"/>
</dbReference>
<dbReference type="InterPro" id="IPR011032">
    <property type="entry name" value="GroES-like_sf"/>
</dbReference>
<dbReference type="InterPro" id="IPR045010">
    <property type="entry name" value="MDR_fam"/>
</dbReference>
<dbReference type="InterPro" id="IPR036291">
    <property type="entry name" value="NAD(P)-bd_dom_sf"/>
</dbReference>
<dbReference type="InterPro" id="IPR020843">
    <property type="entry name" value="PKS_ER"/>
</dbReference>
<dbReference type="PANTHER" id="PTHR43205">
    <property type="entry name" value="PROSTAGLANDIN REDUCTASE"/>
    <property type="match status" value="1"/>
</dbReference>
<dbReference type="PANTHER" id="PTHR43205:SF7">
    <property type="entry name" value="PROSTAGLANDIN REDUCTASE 1"/>
    <property type="match status" value="1"/>
</dbReference>
<dbReference type="Pfam" id="PF16884">
    <property type="entry name" value="ADH_N_2"/>
    <property type="match status" value="1"/>
</dbReference>
<dbReference type="Pfam" id="PF00107">
    <property type="entry name" value="ADH_zinc_N"/>
    <property type="match status" value="1"/>
</dbReference>
<dbReference type="SMART" id="SM00829">
    <property type="entry name" value="PKS_ER"/>
    <property type="match status" value="1"/>
</dbReference>
<dbReference type="SUPFAM" id="SSF50129">
    <property type="entry name" value="GroES-like"/>
    <property type="match status" value="2"/>
</dbReference>
<dbReference type="SUPFAM" id="SSF51735">
    <property type="entry name" value="NAD(P)-binding Rossmann-fold domains"/>
    <property type="match status" value="1"/>
</dbReference>
<reference key="1">
    <citation type="journal article" date="1996" name="DNA Res.">
        <title>A 570-kb DNA sequence of the Escherichia coli K-12 genome corresponding to the 28.0-40.1 min region on the linkage map.</title>
        <authorList>
            <person name="Aiba H."/>
            <person name="Baba T."/>
            <person name="Fujita K."/>
            <person name="Hayashi K."/>
            <person name="Inada T."/>
            <person name="Isono K."/>
            <person name="Itoh T."/>
            <person name="Kasai H."/>
            <person name="Kashimoto K."/>
            <person name="Kimura S."/>
            <person name="Kitakawa M."/>
            <person name="Kitagawa M."/>
            <person name="Makino K."/>
            <person name="Miki T."/>
            <person name="Mizobuchi K."/>
            <person name="Mori H."/>
            <person name="Mori T."/>
            <person name="Motomura K."/>
            <person name="Nakade S."/>
            <person name="Nakamura Y."/>
            <person name="Nashimoto H."/>
            <person name="Nishio Y."/>
            <person name="Oshima T."/>
            <person name="Saito N."/>
            <person name="Sampei G."/>
            <person name="Seki Y."/>
            <person name="Sivasundaram S."/>
            <person name="Tagami H."/>
            <person name="Takeda J."/>
            <person name="Takemoto K."/>
            <person name="Takeuchi Y."/>
            <person name="Wada C."/>
            <person name="Yamamoto Y."/>
            <person name="Horiuchi T."/>
        </authorList>
    </citation>
    <scope>NUCLEOTIDE SEQUENCE [LARGE SCALE GENOMIC DNA]</scope>
    <source>
        <strain>K12 / W3110 / ATCC 27325 / DSM 5911</strain>
    </source>
</reference>
<reference key="2">
    <citation type="journal article" date="1997" name="Science">
        <title>The complete genome sequence of Escherichia coli K-12.</title>
        <authorList>
            <person name="Blattner F.R."/>
            <person name="Plunkett G. III"/>
            <person name="Bloch C.A."/>
            <person name="Perna N.T."/>
            <person name="Burland V."/>
            <person name="Riley M."/>
            <person name="Collado-Vides J."/>
            <person name="Glasner J.D."/>
            <person name="Rode C.K."/>
            <person name="Mayhew G.F."/>
            <person name="Gregor J."/>
            <person name="Davis N.W."/>
            <person name="Kirkpatrick H.A."/>
            <person name="Goeden M.A."/>
            <person name="Rose D.J."/>
            <person name="Mau B."/>
            <person name="Shao Y."/>
        </authorList>
    </citation>
    <scope>NUCLEOTIDE SEQUENCE [LARGE SCALE GENOMIC DNA]</scope>
    <source>
        <strain>K12 / MG1655 / ATCC 47076</strain>
    </source>
</reference>
<reference key="3">
    <citation type="journal article" date="2006" name="Mol. Syst. Biol.">
        <title>Highly accurate genome sequences of Escherichia coli K-12 strains MG1655 and W3110.</title>
        <authorList>
            <person name="Hayashi K."/>
            <person name="Morooka N."/>
            <person name="Yamamoto Y."/>
            <person name="Fujita K."/>
            <person name="Isono K."/>
            <person name="Choi S."/>
            <person name="Ohtsubo E."/>
            <person name="Baba T."/>
            <person name="Wanner B.L."/>
            <person name="Mori H."/>
            <person name="Horiuchi T."/>
        </authorList>
    </citation>
    <scope>NUCLEOTIDE SEQUENCE [LARGE SCALE GENOMIC DNA]</scope>
    <source>
        <strain>K12 / W3110 / ATCC 27325 / DSM 5911</strain>
    </source>
</reference>
<reference key="4">
    <citation type="journal article" date="2011" name="Proc. Natl. Acad. Sci. U.S.A.">
        <title>Discovery of the curcumin metabolic pathway involving a unique enzyme in an intestinal microorganism.</title>
        <authorList>
            <person name="Hassaninasab A."/>
            <person name="Hashimoto Y."/>
            <person name="Tomita-Yokotani K."/>
            <person name="Kobayashi M."/>
        </authorList>
    </citation>
    <scope>FUNCTION AS A CURCUMIN REDUCTASE</scope>
    <scope>CATALYTIC ACTIVITY</scope>
    <scope>MASS SPECTROMETRY</scope>
    <scope>MUTAGENESIS OF CYS-247</scope>
    <scope>SUBSTRATE SPECIFICITY</scope>
    <scope>BIOPHYSICOCHEMICAL PROPERTIES</scope>
    <scope>ACTIVITY REGULATION</scope>
    <scope>SUBUNIT</scope>
    <scope>NOMENCLATURE</scope>
</reference>